<name>AROQ_KINRD</name>
<evidence type="ECO:0000255" key="1">
    <source>
        <dbReference type="HAMAP-Rule" id="MF_00169"/>
    </source>
</evidence>
<keyword id="KW-0028">Amino-acid biosynthesis</keyword>
<keyword id="KW-0057">Aromatic amino acid biosynthesis</keyword>
<keyword id="KW-0456">Lyase</keyword>
<keyword id="KW-1185">Reference proteome</keyword>
<proteinExistence type="inferred from homology"/>
<accession>A6W6P9</accession>
<gene>
    <name evidence="1" type="primary">aroQ</name>
    <name type="ordered locus">Krad_1000</name>
</gene>
<organism>
    <name type="scientific">Kineococcus radiotolerans (strain ATCC BAA-149 / DSM 14245 / SRS30216)</name>
    <dbReference type="NCBI Taxonomy" id="266940"/>
    <lineage>
        <taxon>Bacteria</taxon>
        <taxon>Bacillati</taxon>
        <taxon>Actinomycetota</taxon>
        <taxon>Actinomycetes</taxon>
        <taxon>Kineosporiales</taxon>
        <taxon>Kineosporiaceae</taxon>
        <taxon>Kineococcus</taxon>
    </lineage>
</organism>
<dbReference type="EC" id="4.2.1.10" evidence="1"/>
<dbReference type="EMBL" id="CP000750">
    <property type="protein sequence ID" value="ABS02488.1"/>
    <property type="molecule type" value="Genomic_DNA"/>
</dbReference>
<dbReference type="RefSeq" id="WP_012084660.1">
    <property type="nucleotide sequence ID" value="NC_009664.2"/>
</dbReference>
<dbReference type="SMR" id="A6W6P9"/>
<dbReference type="STRING" id="266940.Krad_1000"/>
<dbReference type="KEGG" id="kra:Krad_1000"/>
<dbReference type="eggNOG" id="COG0757">
    <property type="taxonomic scope" value="Bacteria"/>
</dbReference>
<dbReference type="HOGENOM" id="CLU_090968_2_1_11"/>
<dbReference type="OrthoDB" id="9790793at2"/>
<dbReference type="UniPathway" id="UPA00053">
    <property type="reaction ID" value="UER00086"/>
</dbReference>
<dbReference type="Proteomes" id="UP000001116">
    <property type="component" value="Chromosome"/>
</dbReference>
<dbReference type="GO" id="GO:0003855">
    <property type="term" value="F:3-dehydroquinate dehydratase activity"/>
    <property type="evidence" value="ECO:0007669"/>
    <property type="project" value="UniProtKB-UniRule"/>
</dbReference>
<dbReference type="GO" id="GO:0008652">
    <property type="term" value="P:amino acid biosynthetic process"/>
    <property type="evidence" value="ECO:0007669"/>
    <property type="project" value="UniProtKB-KW"/>
</dbReference>
<dbReference type="GO" id="GO:0009073">
    <property type="term" value="P:aromatic amino acid family biosynthetic process"/>
    <property type="evidence" value="ECO:0007669"/>
    <property type="project" value="UniProtKB-KW"/>
</dbReference>
<dbReference type="GO" id="GO:0009423">
    <property type="term" value="P:chorismate biosynthetic process"/>
    <property type="evidence" value="ECO:0007669"/>
    <property type="project" value="UniProtKB-UniRule"/>
</dbReference>
<dbReference type="GO" id="GO:0019631">
    <property type="term" value="P:quinate catabolic process"/>
    <property type="evidence" value="ECO:0007669"/>
    <property type="project" value="TreeGrafter"/>
</dbReference>
<dbReference type="CDD" id="cd00466">
    <property type="entry name" value="DHQase_II"/>
    <property type="match status" value="1"/>
</dbReference>
<dbReference type="Gene3D" id="3.40.50.9100">
    <property type="entry name" value="Dehydroquinase, class II"/>
    <property type="match status" value="1"/>
</dbReference>
<dbReference type="HAMAP" id="MF_00169">
    <property type="entry name" value="AroQ"/>
    <property type="match status" value="1"/>
</dbReference>
<dbReference type="InterPro" id="IPR001874">
    <property type="entry name" value="DHquinase_II"/>
</dbReference>
<dbReference type="InterPro" id="IPR018509">
    <property type="entry name" value="DHquinase_II_CS"/>
</dbReference>
<dbReference type="InterPro" id="IPR036441">
    <property type="entry name" value="DHquinase_II_sf"/>
</dbReference>
<dbReference type="NCBIfam" id="TIGR01088">
    <property type="entry name" value="aroQ"/>
    <property type="match status" value="1"/>
</dbReference>
<dbReference type="NCBIfam" id="NF003805">
    <property type="entry name" value="PRK05395.1-2"/>
    <property type="match status" value="1"/>
</dbReference>
<dbReference type="NCBIfam" id="NF003806">
    <property type="entry name" value="PRK05395.1-3"/>
    <property type="match status" value="1"/>
</dbReference>
<dbReference type="NCBIfam" id="NF003807">
    <property type="entry name" value="PRK05395.1-4"/>
    <property type="match status" value="1"/>
</dbReference>
<dbReference type="PANTHER" id="PTHR21272">
    <property type="entry name" value="CATABOLIC 3-DEHYDROQUINASE"/>
    <property type="match status" value="1"/>
</dbReference>
<dbReference type="PANTHER" id="PTHR21272:SF3">
    <property type="entry name" value="CATABOLIC 3-DEHYDROQUINASE"/>
    <property type="match status" value="1"/>
</dbReference>
<dbReference type="Pfam" id="PF01220">
    <property type="entry name" value="DHquinase_II"/>
    <property type="match status" value="1"/>
</dbReference>
<dbReference type="PIRSF" id="PIRSF001399">
    <property type="entry name" value="DHquinase_II"/>
    <property type="match status" value="1"/>
</dbReference>
<dbReference type="SUPFAM" id="SSF52304">
    <property type="entry name" value="Type II 3-dehydroquinate dehydratase"/>
    <property type="match status" value="1"/>
</dbReference>
<dbReference type="PROSITE" id="PS01029">
    <property type="entry name" value="DEHYDROQUINASE_II"/>
    <property type="match status" value="1"/>
</dbReference>
<reference key="1">
    <citation type="journal article" date="2008" name="PLoS ONE">
        <title>Survival in nuclear waste, extreme resistance, and potential applications gleaned from the genome sequence of Kineococcus radiotolerans SRS30216.</title>
        <authorList>
            <person name="Bagwell C.E."/>
            <person name="Bhat S."/>
            <person name="Hawkins G.M."/>
            <person name="Smith B.W."/>
            <person name="Biswas T."/>
            <person name="Hoover T.R."/>
            <person name="Saunders E."/>
            <person name="Han C.S."/>
            <person name="Tsodikov O.V."/>
            <person name="Shimkets L.J."/>
        </authorList>
    </citation>
    <scope>NUCLEOTIDE SEQUENCE [LARGE SCALE GENOMIC DNA]</scope>
    <source>
        <strain>ATCC BAA-149 / DSM 14245 / SRS30216</strain>
    </source>
</reference>
<feature type="chain" id="PRO_1000077044" description="3-dehydroquinate dehydratase">
    <location>
        <begin position="1"/>
        <end position="146"/>
    </location>
</feature>
<feature type="active site" description="Proton acceptor" evidence="1">
    <location>
        <position position="22"/>
    </location>
</feature>
<feature type="active site" description="Proton donor" evidence="1">
    <location>
        <position position="99"/>
    </location>
</feature>
<feature type="binding site" evidence="1">
    <location>
        <position position="73"/>
    </location>
    <ligand>
        <name>substrate</name>
    </ligand>
</feature>
<feature type="binding site" evidence="1">
    <location>
        <position position="79"/>
    </location>
    <ligand>
        <name>substrate</name>
    </ligand>
</feature>
<feature type="binding site" evidence="1">
    <location>
        <position position="86"/>
    </location>
    <ligand>
        <name>substrate</name>
    </ligand>
</feature>
<feature type="binding site" evidence="1">
    <location>
        <begin position="100"/>
        <end position="101"/>
    </location>
    <ligand>
        <name>substrate</name>
    </ligand>
</feature>
<feature type="binding site" evidence="1">
    <location>
        <position position="110"/>
    </location>
    <ligand>
        <name>substrate</name>
    </ligand>
</feature>
<feature type="site" description="Transition state stabilizer" evidence="1">
    <location>
        <position position="17"/>
    </location>
</feature>
<protein>
    <recommendedName>
        <fullName evidence="1">3-dehydroquinate dehydratase</fullName>
        <shortName evidence="1">3-dehydroquinase</shortName>
        <ecNumber evidence="1">4.2.1.10</ecNumber>
    </recommendedName>
    <alternativeName>
        <fullName evidence="1">Type II DHQase</fullName>
    </alternativeName>
</protein>
<comment type="function">
    <text evidence="1">Catalyzes a trans-dehydration via an enolate intermediate.</text>
</comment>
<comment type="catalytic activity">
    <reaction evidence="1">
        <text>3-dehydroquinate = 3-dehydroshikimate + H2O</text>
        <dbReference type="Rhea" id="RHEA:21096"/>
        <dbReference type="ChEBI" id="CHEBI:15377"/>
        <dbReference type="ChEBI" id="CHEBI:16630"/>
        <dbReference type="ChEBI" id="CHEBI:32364"/>
        <dbReference type="EC" id="4.2.1.10"/>
    </reaction>
</comment>
<comment type="pathway">
    <text evidence="1">Metabolic intermediate biosynthesis; chorismate biosynthesis; chorismate from D-erythrose 4-phosphate and phosphoenolpyruvate: step 3/7.</text>
</comment>
<comment type="subunit">
    <text evidence="1">Homododecamer.</text>
</comment>
<comment type="similarity">
    <text evidence="1">Belongs to the type-II 3-dehydroquinase family.</text>
</comment>
<sequence>MKILVLNGPNLGRLGRRQPEVYGSETLADVEARLQRLAGELGVEVELRQTDAEHEMLGWIHDAADAGLPVVLNPAAWTHTSVALRDACAELSAGLVEVHVSNVHAREDFRRHSFVSPVATGVVAGLGTAGYDLAVRFLAGRVVGGA</sequence>